<organism>
    <name type="scientific">Acidobacterium capsulatum (strain ATCC 51196 / DSM 11244 / BCRC 80197 / JCM 7670 / NBRC 15755 / NCIMB 13165 / 161)</name>
    <dbReference type="NCBI Taxonomy" id="240015"/>
    <lineage>
        <taxon>Bacteria</taxon>
        <taxon>Pseudomonadati</taxon>
        <taxon>Acidobacteriota</taxon>
        <taxon>Terriglobia</taxon>
        <taxon>Terriglobales</taxon>
        <taxon>Acidobacteriaceae</taxon>
        <taxon>Acidobacterium</taxon>
    </lineage>
</organism>
<sequence>MLRFSTAGESHGESLIALVSGMPAGVPIDQDFVNRELWRRQQGYGRGGRMRIEQDTAHFLSGVRHGKTIGSPIAMEIENRDWKNWTEILPVETGDASKHKAVASPRPGHADLAGALKYDFAEARYVLERASARESTARVAAGAVAKSLLLELGIDVASHVVRVGNVEMERTATWAEIAALRELDEVMLGCVDAETEARMKAEVDRALLTKDTIGGVFEVVVHGAPAGIGTYANWDERLDGVLAQAVMSLQAVKAVEIGRGVTAAASMGSDVHDAIGYAAELPEGAHTRFTRERNNAGGIEGGISNGEDVVVRGYLKPISTLRQPLASVRFDTREETKAAYERSDVCVVPAAGVAAEAMVALAFGRLLLEKFGGDSLRELKRNYDGYLEQIRRF</sequence>
<accession>C1F540</accession>
<keyword id="KW-0028">Amino-acid biosynthesis</keyword>
<keyword id="KW-0057">Aromatic amino acid biosynthesis</keyword>
<keyword id="KW-0274">FAD</keyword>
<keyword id="KW-0285">Flavoprotein</keyword>
<keyword id="KW-0288">FMN</keyword>
<keyword id="KW-0456">Lyase</keyword>
<keyword id="KW-0521">NADP</keyword>
<keyword id="KW-1185">Reference proteome</keyword>
<evidence type="ECO:0000255" key="1">
    <source>
        <dbReference type="HAMAP-Rule" id="MF_00300"/>
    </source>
</evidence>
<gene>
    <name evidence="1" type="primary">aroC</name>
    <name type="ordered locus">ACP_3127</name>
</gene>
<dbReference type="EC" id="4.2.3.5" evidence="1"/>
<dbReference type="EMBL" id="CP001472">
    <property type="protein sequence ID" value="ACO33027.1"/>
    <property type="molecule type" value="Genomic_DNA"/>
</dbReference>
<dbReference type="RefSeq" id="WP_015898173.1">
    <property type="nucleotide sequence ID" value="NC_012483.1"/>
</dbReference>
<dbReference type="SMR" id="C1F540"/>
<dbReference type="FunCoup" id="C1F540">
    <property type="interactions" value="481"/>
</dbReference>
<dbReference type="STRING" id="240015.ACP_3127"/>
<dbReference type="KEGG" id="aca:ACP_3127"/>
<dbReference type="eggNOG" id="COG0082">
    <property type="taxonomic scope" value="Bacteria"/>
</dbReference>
<dbReference type="HOGENOM" id="CLU_034547_2_0_0"/>
<dbReference type="InParanoid" id="C1F540"/>
<dbReference type="OrthoDB" id="9771806at2"/>
<dbReference type="UniPathway" id="UPA00053">
    <property type="reaction ID" value="UER00090"/>
</dbReference>
<dbReference type="Proteomes" id="UP000002207">
    <property type="component" value="Chromosome"/>
</dbReference>
<dbReference type="GO" id="GO:0005829">
    <property type="term" value="C:cytosol"/>
    <property type="evidence" value="ECO:0007669"/>
    <property type="project" value="TreeGrafter"/>
</dbReference>
<dbReference type="GO" id="GO:0004107">
    <property type="term" value="F:chorismate synthase activity"/>
    <property type="evidence" value="ECO:0007669"/>
    <property type="project" value="UniProtKB-UniRule"/>
</dbReference>
<dbReference type="GO" id="GO:0010181">
    <property type="term" value="F:FMN binding"/>
    <property type="evidence" value="ECO:0007669"/>
    <property type="project" value="TreeGrafter"/>
</dbReference>
<dbReference type="GO" id="GO:0008652">
    <property type="term" value="P:amino acid biosynthetic process"/>
    <property type="evidence" value="ECO:0007669"/>
    <property type="project" value="UniProtKB-KW"/>
</dbReference>
<dbReference type="GO" id="GO:0009073">
    <property type="term" value="P:aromatic amino acid family biosynthetic process"/>
    <property type="evidence" value="ECO:0007669"/>
    <property type="project" value="UniProtKB-KW"/>
</dbReference>
<dbReference type="GO" id="GO:0009423">
    <property type="term" value="P:chorismate biosynthetic process"/>
    <property type="evidence" value="ECO:0007669"/>
    <property type="project" value="UniProtKB-UniRule"/>
</dbReference>
<dbReference type="CDD" id="cd07304">
    <property type="entry name" value="Chorismate_synthase"/>
    <property type="match status" value="1"/>
</dbReference>
<dbReference type="FunFam" id="3.60.150.10:FF:000002">
    <property type="entry name" value="Chorismate synthase"/>
    <property type="match status" value="1"/>
</dbReference>
<dbReference type="Gene3D" id="3.60.150.10">
    <property type="entry name" value="Chorismate synthase AroC"/>
    <property type="match status" value="1"/>
</dbReference>
<dbReference type="HAMAP" id="MF_00300">
    <property type="entry name" value="Chorismate_synth"/>
    <property type="match status" value="1"/>
</dbReference>
<dbReference type="InterPro" id="IPR000453">
    <property type="entry name" value="Chorismate_synth"/>
</dbReference>
<dbReference type="InterPro" id="IPR035904">
    <property type="entry name" value="Chorismate_synth_AroC_sf"/>
</dbReference>
<dbReference type="InterPro" id="IPR020541">
    <property type="entry name" value="Chorismate_synthase_CS"/>
</dbReference>
<dbReference type="NCBIfam" id="TIGR00033">
    <property type="entry name" value="aroC"/>
    <property type="match status" value="1"/>
</dbReference>
<dbReference type="NCBIfam" id="NF003793">
    <property type="entry name" value="PRK05382.1"/>
    <property type="match status" value="1"/>
</dbReference>
<dbReference type="PANTHER" id="PTHR21085">
    <property type="entry name" value="CHORISMATE SYNTHASE"/>
    <property type="match status" value="1"/>
</dbReference>
<dbReference type="PANTHER" id="PTHR21085:SF0">
    <property type="entry name" value="CHORISMATE SYNTHASE"/>
    <property type="match status" value="1"/>
</dbReference>
<dbReference type="Pfam" id="PF01264">
    <property type="entry name" value="Chorismate_synt"/>
    <property type="match status" value="1"/>
</dbReference>
<dbReference type="PIRSF" id="PIRSF001456">
    <property type="entry name" value="Chorismate_synth"/>
    <property type="match status" value="1"/>
</dbReference>
<dbReference type="SUPFAM" id="SSF103263">
    <property type="entry name" value="Chorismate synthase, AroC"/>
    <property type="match status" value="1"/>
</dbReference>
<dbReference type="PROSITE" id="PS00787">
    <property type="entry name" value="CHORISMATE_SYNTHASE_1"/>
    <property type="match status" value="1"/>
</dbReference>
<dbReference type="PROSITE" id="PS00788">
    <property type="entry name" value="CHORISMATE_SYNTHASE_2"/>
    <property type="match status" value="1"/>
</dbReference>
<reference key="1">
    <citation type="journal article" date="2009" name="Appl. Environ. Microbiol.">
        <title>Three genomes from the phylum Acidobacteria provide insight into the lifestyles of these microorganisms in soils.</title>
        <authorList>
            <person name="Ward N.L."/>
            <person name="Challacombe J.F."/>
            <person name="Janssen P.H."/>
            <person name="Henrissat B."/>
            <person name="Coutinho P.M."/>
            <person name="Wu M."/>
            <person name="Xie G."/>
            <person name="Haft D.H."/>
            <person name="Sait M."/>
            <person name="Badger J."/>
            <person name="Barabote R.D."/>
            <person name="Bradley B."/>
            <person name="Brettin T.S."/>
            <person name="Brinkac L.M."/>
            <person name="Bruce D."/>
            <person name="Creasy T."/>
            <person name="Daugherty S.C."/>
            <person name="Davidsen T.M."/>
            <person name="DeBoy R.T."/>
            <person name="Detter J.C."/>
            <person name="Dodson R.J."/>
            <person name="Durkin A.S."/>
            <person name="Ganapathy A."/>
            <person name="Gwinn-Giglio M."/>
            <person name="Han C.S."/>
            <person name="Khouri H."/>
            <person name="Kiss H."/>
            <person name="Kothari S.P."/>
            <person name="Madupu R."/>
            <person name="Nelson K.E."/>
            <person name="Nelson W.C."/>
            <person name="Paulsen I."/>
            <person name="Penn K."/>
            <person name="Ren Q."/>
            <person name="Rosovitz M.J."/>
            <person name="Selengut J.D."/>
            <person name="Shrivastava S."/>
            <person name="Sullivan S.A."/>
            <person name="Tapia R."/>
            <person name="Thompson L.S."/>
            <person name="Watkins K.L."/>
            <person name="Yang Q."/>
            <person name="Yu C."/>
            <person name="Zafar N."/>
            <person name="Zhou L."/>
            <person name="Kuske C.R."/>
        </authorList>
    </citation>
    <scope>NUCLEOTIDE SEQUENCE [LARGE SCALE GENOMIC DNA]</scope>
    <source>
        <strain>ATCC 51196 / DSM 11244 / BCRC 80197 / JCM 7670 / NBRC 15755 / NCIMB 13165 / 161</strain>
    </source>
</reference>
<proteinExistence type="inferred from homology"/>
<comment type="function">
    <text evidence="1">Catalyzes the anti-1,4-elimination of the C-3 phosphate and the C-6 proR hydrogen from 5-enolpyruvylshikimate-3-phosphate (EPSP) to yield chorismate, which is the branch point compound that serves as the starting substrate for the three terminal pathways of aromatic amino acid biosynthesis. This reaction introduces a second double bond into the aromatic ring system.</text>
</comment>
<comment type="catalytic activity">
    <reaction evidence="1">
        <text>5-O-(1-carboxyvinyl)-3-phosphoshikimate = chorismate + phosphate</text>
        <dbReference type="Rhea" id="RHEA:21020"/>
        <dbReference type="ChEBI" id="CHEBI:29748"/>
        <dbReference type="ChEBI" id="CHEBI:43474"/>
        <dbReference type="ChEBI" id="CHEBI:57701"/>
        <dbReference type="EC" id="4.2.3.5"/>
    </reaction>
</comment>
<comment type="cofactor">
    <cofactor evidence="1">
        <name>FMNH2</name>
        <dbReference type="ChEBI" id="CHEBI:57618"/>
    </cofactor>
    <text evidence="1">Reduced FMN (FMNH(2)).</text>
</comment>
<comment type="pathway">
    <text evidence="1">Metabolic intermediate biosynthesis; chorismate biosynthesis; chorismate from D-erythrose 4-phosphate and phosphoenolpyruvate: step 7/7.</text>
</comment>
<comment type="subunit">
    <text evidence="1">Homotetramer.</text>
</comment>
<comment type="similarity">
    <text evidence="1">Belongs to the chorismate synthase family.</text>
</comment>
<protein>
    <recommendedName>
        <fullName evidence="1">Chorismate synthase</fullName>
        <shortName evidence="1">CS</shortName>
        <ecNumber evidence="1">4.2.3.5</ecNumber>
    </recommendedName>
    <alternativeName>
        <fullName evidence="1">5-enolpyruvylshikimate-3-phosphate phospholyase</fullName>
    </alternativeName>
</protein>
<feature type="chain" id="PRO_1000132749" description="Chorismate synthase">
    <location>
        <begin position="1"/>
        <end position="393"/>
    </location>
</feature>
<feature type="binding site" evidence="1">
    <location>
        <position position="40"/>
    </location>
    <ligand>
        <name>NADP(+)</name>
        <dbReference type="ChEBI" id="CHEBI:58349"/>
    </ligand>
</feature>
<feature type="binding site" evidence="1">
    <location>
        <position position="46"/>
    </location>
    <ligand>
        <name>NADP(+)</name>
        <dbReference type="ChEBI" id="CHEBI:58349"/>
    </ligand>
</feature>
<feature type="binding site" evidence="1">
    <location>
        <begin position="129"/>
        <end position="131"/>
    </location>
    <ligand>
        <name>FMN</name>
        <dbReference type="ChEBI" id="CHEBI:58210"/>
    </ligand>
</feature>
<feature type="binding site" evidence="1">
    <location>
        <begin position="250"/>
        <end position="251"/>
    </location>
    <ligand>
        <name>FMN</name>
        <dbReference type="ChEBI" id="CHEBI:58210"/>
    </ligand>
</feature>
<feature type="binding site" evidence="1">
    <location>
        <position position="301"/>
    </location>
    <ligand>
        <name>FMN</name>
        <dbReference type="ChEBI" id="CHEBI:58210"/>
    </ligand>
</feature>
<feature type="binding site" evidence="1">
    <location>
        <begin position="316"/>
        <end position="320"/>
    </location>
    <ligand>
        <name>FMN</name>
        <dbReference type="ChEBI" id="CHEBI:58210"/>
    </ligand>
</feature>
<feature type="binding site" evidence="1">
    <location>
        <position position="342"/>
    </location>
    <ligand>
        <name>FMN</name>
        <dbReference type="ChEBI" id="CHEBI:58210"/>
    </ligand>
</feature>
<name>AROC_ACIC5</name>